<sequence length="387" mass="41227">MERVYLDNNATTRLAPEALQAMLPFLTEEFGNPSSLHGQGRAPARALMAARRAVLELIGAEADSEILFTSGGTEADTTAIRSALAADPSRREIVTSTVEHAAVLALCDHLERQEGVTVHRIPVDGDGRLDIEAYRAALSPRVALVSLMWANNETGTVFPVEGLAELAHRAGALFHTDAVQAVGKVPIVLRGTEIDMLSLSAHKFHGPKGVGALWLRKGVPFQPLIRGGRQQRGHRAGTENIPGIVGLGRAAELALGGDHGAVRLLRDRLEQGILARVPKARVLGDPLDRLPNTSCVAFDFAEGEAIVMLLDRAGICVSSGAACASGAMEPSHVIRAMKVPFTAAHGAIRFSLSHWTTAAEIDRLLEVLPPIVDQLRALSPFGAEEVK</sequence>
<accession>Q01179</accession>
<gene>
    <name evidence="2" type="primary">nifS</name>
</gene>
<keyword id="KW-0408">Iron</keyword>
<keyword id="KW-0411">Iron-sulfur</keyword>
<keyword id="KW-0479">Metal-binding</keyword>
<keyword id="KW-0535">Nitrogen fixation</keyword>
<keyword id="KW-0663">Pyridoxal phosphate</keyword>
<keyword id="KW-0808">Transferase</keyword>
<evidence type="ECO:0000250" key="1">
    <source>
        <dbReference type="UniProtKB" id="O29689"/>
    </source>
</evidence>
<evidence type="ECO:0000250" key="2">
    <source>
        <dbReference type="UniProtKB" id="P05341"/>
    </source>
</evidence>
<evidence type="ECO:0000250" key="3">
    <source>
        <dbReference type="UniProtKB" id="P0A6B9"/>
    </source>
</evidence>
<evidence type="ECO:0000305" key="4"/>
<feature type="chain" id="PRO_0000150259" description="Cysteine desulfurase">
    <location>
        <begin position="1"/>
        <end position="387"/>
    </location>
</feature>
<feature type="active site" description="Cysteine persulfide intermediate" evidence="2">
    <location>
        <position position="323"/>
    </location>
</feature>
<feature type="binding site" evidence="3">
    <location>
        <begin position="72"/>
        <end position="73"/>
    </location>
    <ligand>
        <name>pyridoxal 5'-phosphate</name>
        <dbReference type="ChEBI" id="CHEBI:597326"/>
    </ligand>
</feature>
<feature type="binding site" evidence="1">
    <location>
        <position position="152"/>
    </location>
    <ligand>
        <name>pyridoxal 5'-phosphate</name>
        <dbReference type="ChEBI" id="CHEBI:597326"/>
    </ligand>
</feature>
<feature type="binding site" evidence="3">
    <location>
        <position position="180"/>
    </location>
    <ligand>
        <name>pyridoxal 5'-phosphate</name>
        <dbReference type="ChEBI" id="CHEBI:597326"/>
    </ligand>
</feature>
<feature type="binding site" evidence="3">
    <location>
        <begin position="200"/>
        <end position="202"/>
    </location>
    <ligand>
        <name>pyridoxal 5'-phosphate</name>
        <dbReference type="ChEBI" id="CHEBI:597326"/>
    </ligand>
</feature>
<feature type="binding site" evidence="3">
    <location>
        <position position="238"/>
    </location>
    <ligand>
        <name>pyridoxal 5'-phosphate</name>
        <dbReference type="ChEBI" id="CHEBI:597326"/>
    </ligand>
</feature>
<feature type="binding site" description="via persulfide group" evidence="1">
    <location>
        <position position="323"/>
    </location>
    <ligand>
        <name>[2Fe-2S] cluster</name>
        <dbReference type="ChEBI" id="CHEBI:190135"/>
    </ligand>
</feature>
<feature type="modified residue" description="N6-(pyridoxal phosphate)lysine" evidence="3">
    <location>
        <position position="203"/>
    </location>
</feature>
<comment type="function">
    <text evidence="2">Catalyzes the removal of elemental sulfur atoms from cysteine to produce alanine. Seems to participate in the biosynthesis of the nitrogenase metalloclusters by providing the inorganic sulfur required for the Fe-S core formation.</text>
</comment>
<comment type="catalytic activity">
    <reaction evidence="2">
        <text>(sulfur carrier)-H + L-cysteine = (sulfur carrier)-SH + L-alanine</text>
        <dbReference type="Rhea" id="RHEA:43892"/>
        <dbReference type="Rhea" id="RHEA-COMP:14737"/>
        <dbReference type="Rhea" id="RHEA-COMP:14739"/>
        <dbReference type="ChEBI" id="CHEBI:29917"/>
        <dbReference type="ChEBI" id="CHEBI:35235"/>
        <dbReference type="ChEBI" id="CHEBI:57972"/>
        <dbReference type="ChEBI" id="CHEBI:64428"/>
        <dbReference type="EC" id="2.8.1.7"/>
    </reaction>
</comment>
<comment type="cofactor">
    <cofactor evidence="2">
        <name>pyridoxal 5'-phosphate</name>
        <dbReference type="ChEBI" id="CHEBI:597326"/>
    </cofactor>
</comment>
<comment type="subunit">
    <text evidence="2">Homodimer.</text>
</comment>
<comment type="similarity">
    <text evidence="4">Belongs to the class-V pyridoxal-phosphate-dependent aminotransferase family. NifS/IscS subfamily.</text>
</comment>
<name>NIFS_CERSP</name>
<dbReference type="EC" id="2.8.1.7" evidence="2"/>
<dbReference type="EMBL" id="M86823">
    <property type="protein sequence ID" value="AAA26137.1"/>
    <property type="molecule type" value="Genomic_DNA"/>
</dbReference>
<dbReference type="PIR" id="C41880">
    <property type="entry name" value="C41880"/>
</dbReference>
<dbReference type="RefSeq" id="WP_011338298.1">
    <property type="nucleotide sequence ID" value="NZ_WSNV01000246.1"/>
</dbReference>
<dbReference type="SMR" id="Q01179"/>
<dbReference type="GeneID" id="3718039"/>
<dbReference type="GO" id="GO:0031071">
    <property type="term" value="F:cysteine desulfurase activity"/>
    <property type="evidence" value="ECO:0007669"/>
    <property type="project" value="UniProtKB-EC"/>
</dbReference>
<dbReference type="GO" id="GO:0051536">
    <property type="term" value="F:iron-sulfur cluster binding"/>
    <property type="evidence" value="ECO:0007669"/>
    <property type="project" value="UniProtKB-KW"/>
</dbReference>
<dbReference type="GO" id="GO:0046872">
    <property type="term" value="F:metal ion binding"/>
    <property type="evidence" value="ECO:0007669"/>
    <property type="project" value="UniProtKB-KW"/>
</dbReference>
<dbReference type="GO" id="GO:0030170">
    <property type="term" value="F:pyridoxal phosphate binding"/>
    <property type="evidence" value="ECO:0007669"/>
    <property type="project" value="InterPro"/>
</dbReference>
<dbReference type="GO" id="GO:0006520">
    <property type="term" value="P:amino acid metabolic process"/>
    <property type="evidence" value="ECO:0007669"/>
    <property type="project" value="InterPro"/>
</dbReference>
<dbReference type="GO" id="GO:0009399">
    <property type="term" value="P:nitrogen fixation"/>
    <property type="evidence" value="ECO:0007669"/>
    <property type="project" value="UniProtKB-KW"/>
</dbReference>
<dbReference type="FunFam" id="3.40.640.10:FF:000084">
    <property type="entry name" value="IscS-like cysteine desulfurase"/>
    <property type="match status" value="1"/>
</dbReference>
<dbReference type="Gene3D" id="1.10.260.50">
    <property type="match status" value="1"/>
</dbReference>
<dbReference type="Gene3D" id="3.90.1150.10">
    <property type="entry name" value="Aspartate Aminotransferase, domain 1"/>
    <property type="match status" value="1"/>
</dbReference>
<dbReference type="Gene3D" id="3.40.640.10">
    <property type="entry name" value="Type I PLP-dependent aspartate aminotransferase-like (Major domain)"/>
    <property type="match status" value="1"/>
</dbReference>
<dbReference type="InterPro" id="IPR000192">
    <property type="entry name" value="Aminotrans_V_dom"/>
</dbReference>
<dbReference type="InterPro" id="IPR020578">
    <property type="entry name" value="Aminotrans_V_PyrdxlP_BS"/>
</dbReference>
<dbReference type="InterPro" id="IPR017772">
    <property type="entry name" value="Cys_deSase_NifS_bac/arc"/>
</dbReference>
<dbReference type="InterPro" id="IPR016454">
    <property type="entry name" value="Cysteine_dSase"/>
</dbReference>
<dbReference type="InterPro" id="IPR015424">
    <property type="entry name" value="PyrdxlP-dep_Trfase"/>
</dbReference>
<dbReference type="InterPro" id="IPR015421">
    <property type="entry name" value="PyrdxlP-dep_Trfase_major"/>
</dbReference>
<dbReference type="InterPro" id="IPR015422">
    <property type="entry name" value="PyrdxlP-dep_Trfase_small"/>
</dbReference>
<dbReference type="NCBIfam" id="TIGR03402">
    <property type="entry name" value="FeS_nifS"/>
    <property type="match status" value="1"/>
</dbReference>
<dbReference type="PANTHER" id="PTHR11601:SF34">
    <property type="entry name" value="CYSTEINE DESULFURASE"/>
    <property type="match status" value="1"/>
</dbReference>
<dbReference type="PANTHER" id="PTHR11601">
    <property type="entry name" value="CYSTEINE DESULFURYLASE FAMILY MEMBER"/>
    <property type="match status" value="1"/>
</dbReference>
<dbReference type="Pfam" id="PF00266">
    <property type="entry name" value="Aminotran_5"/>
    <property type="match status" value="1"/>
</dbReference>
<dbReference type="PIRSF" id="PIRSF005572">
    <property type="entry name" value="NifS"/>
    <property type="match status" value="1"/>
</dbReference>
<dbReference type="SUPFAM" id="SSF53383">
    <property type="entry name" value="PLP-dependent transferases"/>
    <property type="match status" value="1"/>
</dbReference>
<dbReference type="PROSITE" id="PS00595">
    <property type="entry name" value="AA_TRANSFER_CLASS_5"/>
    <property type="match status" value="1"/>
</dbReference>
<organism>
    <name type="scientific">Cereibacter sphaeroides</name>
    <name type="common">Rhodobacter sphaeroides</name>
    <dbReference type="NCBI Taxonomy" id="1063"/>
    <lineage>
        <taxon>Bacteria</taxon>
        <taxon>Pseudomonadati</taxon>
        <taxon>Pseudomonadota</taxon>
        <taxon>Alphaproteobacteria</taxon>
        <taxon>Rhodobacterales</taxon>
        <taxon>Paracoccaceae</taxon>
        <taxon>Cereibacter</taxon>
    </lineage>
</organism>
<proteinExistence type="inferred from homology"/>
<reference key="1">
    <citation type="journal article" date="1992" name="J. Bacteriol.">
        <title>Isolation and characterization of the nifUSVW-rpoN gene cluster from Rhodobacter sphaeroides.</title>
        <authorList>
            <person name="Meijer W.G."/>
            <person name="Tabita F.R."/>
        </authorList>
    </citation>
    <scope>NUCLEOTIDE SEQUENCE [GENOMIC DNA]</scope>
</reference>
<protein>
    <recommendedName>
        <fullName evidence="2">Cysteine desulfurase</fullName>
        <ecNumber evidence="2">2.8.1.7</ecNumber>
    </recommendedName>
    <alternativeName>
        <fullName evidence="2">Nitrogenase metalloclusters biosynthesis protein NifS</fullName>
    </alternativeName>
</protein>